<reference key="1">
    <citation type="journal article" date="2009" name="J. Bacteriol.">
        <title>Role of conjugative elements in the evolution of the multidrug-resistant pandemic clone Streptococcus pneumoniae Spain23F ST81.</title>
        <authorList>
            <person name="Croucher N.J."/>
            <person name="Walker D."/>
            <person name="Romero P."/>
            <person name="Lennard N."/>
            <person name="Paterson G.K."/>
            <person name="Bason N.C."/>
            <person name="Mitchell A.M."/>
            <person name="Quail M.A."/>
            <person name="Andrew P.W."/>
            <person name="Parkhill J."/>
            <person name="Bentley S.D."/>
            <person name="Mitchell T.J."/>
        </authorList>
    </citation>
    <scope>NUCLEOTIDE SEQUENCE [LARGE SCALE GENOMIC DNA]</scope>
    <source>
        <strain>ATCC 700669 / Spain 23F-1</strain>
    </source>
</reference>
<evidence type="ECO:0000255" key="1">
    <source>
        <dbReference type="HAMAP-Rule" id="MF_01365"/>
    </source>
</evidence>
<evidence type="ECO:0000305" key="2"/>
<comment type="function">
    <text evidence="1">This protein binds to the 23S rRNA, and is important in its secondary structure. It is located near the subunit interface in the base of the L7/L12 stalk, and near the tRNA binding site of the peptidyltransferase center.</text>
</comment>
<comment type="subunit">
    <text evidence="1">Part of the 50S ribosomal subunit.</text>
</comment>
<comment type="similarity">
    <text evidence="1">Belongs to the universal ribosomal protein uL6 family.</text>
</comment>
<proteinExistence type="inferred from homology"/>
<gene>
    <name evidence="1" type="primary">rplF</name>
    <name type="ordered locus">SPN23F02140</name>
</gene>
<keyword id="KW-0687">Ribonucleoprotein</keyword>
<keyword id="KW-0689">Ribosomal protein</keyword>
<keyword id="KW-0694">RNA-binding</keyword>
<keyword id="KW-0699">rRNA-binding</keyword>
<sequence length="178" mass="19441">MSRIGNKVIVLPAGVELANNDNVVTVKGPKGELTREFSKDIEIRVEGTEITLHRPNDSKEMKTIHGTTRALLNNMVVGVSEGFKKELEMRGVGYRAQLQGSKLVLAVGKSHPDEVEAPEGITFELPNPTTIVVSGISKEVVGQTAAYVRSLRSPEPYKGKGIRYVGEFVRRKEGKTGK</sequence>
<accession>B8ZKP5</accession>
<dbReference type="EMBL" id="FM211187">
    <property type="protein sequence ID" value="CAR68074.1"/>
    <property type="molecule type" value="Genomic_DNA"/>
</dbReference>
<dbReference type="RefSeq" id="WP_000086630.1">
    <property type="nucleotide sequence ID" value="NC_011900.1"/>
</dbReference>
<dbReference type="SMR" id="B8ZKP5"/>
<dbReference type="GeneID" id="45652294"/>
<dbReference type="KEGG" id="sne:SPN23F02140"/>
<dbReference type="HOGENOM" id="CLU_065464_1_2_9"/>
<dbReference type="GO" id="GO:0022625">
    <property type="term" value="C:cytosolic large ribosomal subunit"/>
    <property type="evidence" value="ECO:0007669"/>
    <property type="project" value="TreeGrafter"/>
</dbReference>
<dbReference type="GO" id="GO:0019843">
    <property type="term" value="F:rRNA binding"/>
    <property type="evidence" value="ECO:0007669"/>
    <property type="project" value="UniProtKB-UniRule"/>
</dbReference>
<dbReference type="GO" id="GO:0003735">
    <property type="term" value="F:structural constituent of ribosome"/>
    <property type="evidence" value="ECO:0007669"/>
    <property type="project" value="InterPro"/>
</dbReference>
<dbReference type="GO" id="GO:0002181">
    <property type="term" value="P:cytoplasmic translation"/>
    <property type="evidence" value="ECO:0007669"/>
    <property type="project" value="TreeGrafter"/>
</dbReference>
<dbReference type="FunFam" id="3.90.930.12:FF:000001">
    <property type="entry name" value="50S ribosomal protein L6"/>
    <property type="match status" value="1"/>
</dbReference>
<dbReference type="FunFam" id="3.90.930.12:FF:000002">
    <property type="entry name" value="50S ribosomal protein L6"/>
    <property type="match status" value="1"/>
</dbReference>
<dbReference type="Gene3D" id="3.90.930.12">
    <property type="entry name" value="Ribosomal protein L6, alpha-beta domain"/>
    <property type="match status" value="2"/>
</dbReference>
<dbReference type="HAMAP" id="MF_01365_B">
    <property type="entry name" value="Ribosomal_uL6_B"/>
    <property type="match status" value="1"/>
</dbReference>
<dbReference type="InterPro" id="IPR000702">
    <property type="entry name" value="Ribosomal_uL6-like"/>
</dbReference>
<dbReference type="InterPro" id="IPR036789">
    <property type="entry name" value="Ribosomal_uL6-like_a/b-dom_sf"/>
</dbReference>
<dbReference type="InterPro" id="IPR020040">
    <property type="entry name" value="Ribosomal_uL6_a/b-dom"/>
</dbReference>
<dbReference type="InterPro" id="IPR019906">
    <property type="entry name" value="Ribosomal_uL6_bac-type"/>
</dbReference>
<dbReference type="InterPro" id="IPR002358">
    <property type="entry name" value="Ribosomal_uL6_CS"/>
</dbReference>
<dbReference type="NCBIfam" id="TIGR03654">
    <property type="entry name" value="L6_bact"/>
    <property type="match status" value="1"/>
</dbReference>
<dbReference type="PANTHER" id="PTHR11655">
    <property type="entry name" value="60S/50S RIBOSOMAL PROTEIN L6/L9"/>
    <property type="match status" value="1"/>
</dbReference>
<dbReference type="PANTHER" id="PTHR11655:SF14">
    <property type="entry name" value="LARGE RIBOSOMAL SUBUNIT PROTEIN UL6M"/>
    <property type="match status" value="1"/>
</dbReference>
<dbReference type="Pfam" id="PF00347">
    <property type="entry name" value="Ribosomal_L6"/>
    <property type="match status" value="2"/>
</dbReference>
<dbReference type="PIRSF" id="PIRSF002162">
    <property type="entry name" value="Ribosomal_L6"/>
    <property type="match status" value="1"/>
</dbReference>
<dbReference type="PRINTS" id="PR00059">
    <property type="entry name" value="RIBOSOMALL6"/>
</dbReference>
<dbReference type="SUPFAM" id="SSF56053">
    <property type="entry name" value="Ribosomal protein L6"/>
    <property type="match status" value="2"/>
</dbReference>
<dbReference type="PROSITE" id="PS00525">
    <property type="entry name" value="RIBOSOMAL_L6_1"/>
    <property type="match status" value="1"/>
</dbReference>
<organism>
    <name type="scientific">Streptococcus pneumoniae (strain ATCC 700669 / Spain 23F-1)</name>
    <dbReference type="NCBI Taxonomy" id="561276"/>
    <lineage>
        <taxon>Bacteria</taxon>
        <taxon>Bacillati</taxon>
        <taxon>Bacillota</taxon>
        <taxon>Bacilli</taxon>
        <taxon>Lactobacillales</taxon>
        <taxon>Streptococcaceae</taxon>
        <taxon>Streptococcus</taxon>
    </lineage>
</organism>
<name>RL6_STRPJ</name>
<feature type="chain" id="PRO_1000166832" description="Large ribosomal subunit protein uL6">
    <location>
        <begin position="1"/>
        <end position="178"/>
    </location>
</feature>
<protein>
    <recommendedName>
        <fullName evidence="1">Large ribosomal subunit protein uL6</fullName>
    </recommendedName>
    <alternativeName>
        <fullName evidence="2">50S ribosomal protein L6</fullName>
    </alternativeName>
</protein>